<reference key="1">
    <citation type="journal article" date="2008" name="BMC Genomics">
        <title>Complete genome of Phenylobacterium zucineum - a novel facultative intracellular bacterium isolated from human erythroleukemia cell line K562.</title>
        <authorList>
            <person name="Luo Y."/>
            <person name="Xu X."/>
            <person name="Ding Z."/>
            <person name="Liu Z."/>
            <person name="Zhang B."/>
            <person name="Yan Z."/>
            <person name="Sun J."/>
            <person name="Hu S."/>
            <person name="Hu X."/>
        </authorList>
    </citation>
    <scope>NUCLEOTIDE SEQUENCE [LARGE SCALE GENOMIC DNA]</scope>
    <source>
        <strain>HLK1</strain>
    </source>
</reference>
<protein>
    <recommendedName>
        <fullName evidence="1">Phosphoglucosamine mutase</fullName>
        <ecNumber evidence="1">5.4.2.10</ecNumber>
    </recommendedName>
</protein>
<organism>
    <name type="scientific">Phenylobacterium zucineum (strain HLK1)</name>
    <dbReference type="NCBI Taxonomy" id="450851"/>
    <lineage>
        <taxon>Bacteria</taxon>
        <taxon>Pseudomonadati</taxon>
        <taxon>Pseudomonadota</taxon>
        <taxon>Alphaproteobacteria</taxon>
        <taxon>Caulobacterales</taxon>
        <taxon>Caulobacteraceae</taxon>
        <taxon>Phenylobacterium</taxon>
    </lineage>
</organism>
<dbReference type="EC" id="5.4.2.10" evidence="1"/>
<dbReference type="EMBL" id="CP000747">
    <property type="protein sequence ID" value="ACG79371.1"/>
    <property type="molecule type" value="Genomic_DNA"/>
</dbReference>
<dbReference type="RefSeq" id="WP_012523509.1">
    <property type="nucleotide sequence ID" value="NC_011144.1"/>
</dbReference>
<dbReference type="SMR" id="B4R906"/>
<dbReference type="STRING" id="450851.PHZ_c2962"/>
<dbReference type="KEGG" id="pzu:PHZ_c2962"/>
<dbReference type="eggNOG" id="COG1109">
    <property type="taxonomic scope" value="Bacteria"/>
</dbReference>
<dbReference type="HOGENOM" id="CLU_016950_7_0_5"/>
<dbReference type="OrthoDB" id="9803322at2"/>
<dbReference type="Proteomes" id="UP000001868">
    <property type="component" value="Chromosome"/>
</dbReference>
<dbReference type="GO" id="GO:0005829">
    <property type="term" value="C:cytosol"/>
    <property type="evidence" value="ECO:0007669"/>
    <property type="project" value="TreeGrafter"/>
</dbReference>
<dbReference type="GO" id="GO:0000287">
    <property type="term" value="F:magnesium ion binding"/>
    <property type="evidence" value="ECO:0007669"/>
    <property type="project" value="UniProtKB-UniRule"/>
</dbReference>
<dbReference type="GO" id="GO:0008966">
    <property type="term" value="F:phosphoglucosamine mutase activity"/>
    <property type="evidence" value="ECO:0007669"/>
    <property type="project" value="UniProtKB-UniRule"/>
</dbReference>
<dbReference type="GO" id="GO:0004615">
    <property type="term" value="F:phosphomannomutase activity"/>
    <property type="evidence" value="ECO:0007669"/>
    <property type="project" value="TreeGrafter"/>
</dbReference>
<dbReference type="GO" id="GO:0005975">
    <property type="term" value="P:carbohydrate metabolic process"/>
    <property type="evidence" value="ECO:0007669"/>
    <property type="project" value="InterPro"/>
</dbReference>
<dbReference type="GO" id="GO:0009252">
    <property type="term" value="P:peptidoglycan biosynthetic process"/>
    <property type="evidence" value="ECO:0007669"/>
    <property type="project" value="TreeGrafter"/>
</dbReference>
<dbReference type="GO" id="GO:0006048">
    <property type="term" value="P:UDP-N-acetylglucosamine biosynthetic process"/>
    <property type="evidence" value="ECO:0007669"/>
    <property type="project" value="TreeGrafter"/>
</dbReference>
<dbReference type="CDD" id="cd05802">
    <property type="entry name" value="GlmM"/>
    <property type="match status" value="1"/>
</dbReference>
<dbReference type="FunFam" id="3.30.310.50:FF:000001">
    <property type="entry name" value="Phosphoglucosamine mutase"/>
    <property type="match status" value="1"/>
</dbReference>
<dbReference type="FunFam" id="3.40.120.10:FF:000001">
    <property type="entry name" value="Phosphoglucosamine mutase"/>
    <property type="match status" value="1"/>
</dbReference>
<dbReference type="FunFam" id="3.40.120.10:FF:000003">
    <property type="entry name" value="Phosphoglucosamine mutase"/>
    <property type="match status" value="1"/>
</dbReference>
<dbReference type="Gene3D" id="3.40.120.10">
    <property type="entry name" value="Alpha-D-Glucose-1,6-Bisphosphate, subunit A, domain 3"/>
    <property type="match status" value="3"/>
</dbReference>
<dbReference type="Gene3D" id="3.30.310.50">
    <property type="entry name" value="Alpha-D-phosphohexomutase, C-terminal domain"/>
    <property type="match status" value="1"/>
</dbReference>
<dbReference type="HAMAP" id="MF_01554_B">
    <property type="entry name" value="GlmM_B"/>
    <property type="match status" value="1"/>
</dbReference>
<dbReference type="InterPro" id="IPR005844">
    <property type="entry name" value="A-D-PHexomutase_a/b/a-I"/>
</dbReference>
<dbReference type="InterPro" id="IPR016055">
    <property type="entry name" value="A-D-PHexomutase_a/b/a-I/II/III"/>
</dbReference>
<dbReference type="InterPro" id="IPR005845">
    <property type="entry name" value="A-D-PHexomutase_a/b/a-II"/>
</dbReference>
<dbReference type="InterPro" id="IPR005846">
    <property type="entry name" value="A-D-PHexomutase_a/b/a-III"/>
</dbReference>
<dbReference type="InterPro" id="IPR005843">
    <property type="entry name" value="A-D-PHexomutase_C"/>
</dbReference>
<dbReference type="InterPro" id="IPR036900">
    <property type="entry name" value="A-D-PHexomutase_C_sf"/>
</dbReference>
<dbReference type="InterPro" id="IPR005841">
    <property type="entry name" value="Alpha-D-phosphohexomutase_SF"/>
</dbReference>
<dbReference type="InterPro" id="IPR006352">
    <property type="entry name" value="GlmM_bact"/>
</dbReference>
<dbReference type="InterPro" id="IPR050060">
    <property type="entry name" value="Phosphoglucosamine_mutase"/>
</dbReference>
<dbReference type="NCBIfam" id="TIGR01455">
    <property type="entry name" value="glmM"/>
    <property type="match status" value="1"/>
</dbReference>
<dbReference type="NCBIfam" id="NF008139">
    <property type="entry name" value="PRK10887.1"/>
    <property type="match status" value="1"/>
</dbReference>
<dbReference type="PANTHER" id="PTHR42946:SF1">
    <property type="entry name" value="PHOSPHOGLUCOMUTASE (ALPHA-D-GLUCOSE-1,6-BISPHOSPHATE-DEPENDENT)"/>
    <property type="match status" value="1"/>
</dbReference>
<dbReference type="PANTHER" id="PTHR42946">
    <property type="entry name" value="PHOSPHOHEXOSE MUTASE"/>
    <property type="match status" value="1"/>
</dbReference>
<dbReference type="Pfam" id="PF02878">
    <property type="entry name" value="PGM_PMM_I"/>
    <property type="match status" value="1"/>
</dbReference>
<dbReference type="Pfam" id="PF02879">
    <property type="entry name" value="PGM_PMM_II"/>
    <property type="match status" value="1"/>
</dbReference>
<dbReference type="Pfam" id="PF02880">
    <property type="entry name" value="PGM_PMM_III"/>
    <property type="match status" value="1"/>
</dbReference>
<dbReference type="Pfam" id="PF00408">
    <property type="entry name" value="PGM_PMM_IV"/>
    <property type="match status" value="1"/>
</dbReference>
<dbReference type="PRINTS" id="PR00509">
    <property type="entry name" value="PGMPMM"/>
</dbReference>
<dbReference type="SUPFAM" id="SSF55957">
    <property type="entry name" value="Phosphoglucomutase, C-terminal domain"/>
    <property type="match status" value="1"/>
</dbReference>
<dbReference type="SUPFAM" id="SSF53738">
    <property type="entry name" value="Phosphoglucomutase, first 3 domains"/>
    <property type="match status" value="3"/>
</dbReference>
<proteinExistence type="inferred from homology"/>
<accession>B4R906</accession>
<gene>
    <name evidence="1" type="primary">glmM</name>
    <name type="ordered locus">PHZ_c2962</name>
</gene>
<feature type="chain" id="PRO_1000201124" description="Phosphoglucosamine mutase">
    <location>
        <begin position="1"/>
        <end position="450"/>
    </location>
</feature>
<feature type="active site" description="Phosphoserine intermediate" evidence="1">
    <location>
        <position position="104"/>
    </location>
</feature>
<feature type="binding site" description="via phosphate group" evidence="1">
    <location>
        <position position="104"/>
    </location>
    <ligand>
        <name>Mg(2+)</name>
        <dbReference type="ChEBI" id="CHEBI:18420"/>
    </ligand>
</feature>
<feature type="binding site" evidence="1">
    <location>
        <position position="245"/>
    </location>
    <ligand>
        <name>Mg(2+)</name>
        <dbReference type="ChEBI" id="CHEBI:18420"/>
    </ligand>
</feature>
<feature type="binding site" evidence="1">
    <location>
        <position position="247"/>
    </location>
    <ligand>
        <name>Mg(2+)</name>
        <dbReference type="ChEBI" id="CHEBI:18420"/>
    </ligand>
</feature>
<feature type="binding site" evidence="1">
    <location>
        <position position="249"/>
    </location>
    <ligand>
        <name>Mg(2+)</name>
        <dbReference type="ChEBI" id="CHEBI:18420"/>
    </ligand>
</feature>
<feature type="modified residue" description="Phosphoserine" evidence="1">
    <location>
        <position position="104"/>
    </location>
</feature>
<name>GLMM_PHEZH</name>
<sequence>MSKRAYFGTDGIRGQANRHPMTAEVALRVGMAAGKLFMSKDDRRHLVVIGKDTRLSGYMIEPALVAGFTSVGMDVRLFGPLPTPGVAMMTRSLRADLGVMISASHNHFADNGIKLFGPDGYKLSDEKELEIEALMDQGLQEGLATPDKLGRVQRIDDCQARYVEIAKATFPKGLSLAGMRIVIDCANGAAYKVAPETLYELGAEVIRVGVEPNGFNINEECGSTHPAAMSRLVKEYRADIGIALDGDADRLVICDEKGQVVDGDQIMALIADSWAKAGRLQGGGVVATVMSNLGLERFLKARNLKLERTQVGDRYVMARMREGGFNVGGEQSGHVILSDLSTTGDGLLAALQVLAVLQESDRPMSALARQFEPVPQKLENVRFGSGKPLEHDAVKKALAEAEQRLNGSGRIVVRASGTEPLIRVMAEGDDEKLVSQVVKEIVGAVKKVAA</sequence>
<keyword id="KW-0413">Isomerase</keyword>
<keyword id="KW-0460">Magnesium</keyword>
<keyword id="KW-0479">Metal-binding</keyword>
<keyword id="KW-0597">Phosphoprotein</keyword>
<keyword id="KW-1185">Reference proteome</keyword>
<comment type="function">
    <text evidence="1">Catalyzes the conversion of glucosamine-6-phosphate to glucosamine-1-phosphate.</text>
</comment>
<comment type="catalytic activity">
    <reaction evidence="1">
        <text>alpha-D-glucosamine 1-phosphate = D-glucosamine 6-phosphate</text>
        <dbReference type="Rhea" id="RHEA:23424"/>
        <dbReference type="ChEBI" id="CHEBI:58516"/>
        <dbReference type="ChEBI" id="CHEBI:58725"/>
        <dbReference type="EC" id="5.4.2.10"/>
    </reaction>
</comment>
<comment type="cofactor">
    <cofactor evidence="1">
        <name>Mg(2+)</name>
        <dbReference type="ChEBI" id="CHEBI:18420"/>
    </cofactor>
    <text evidence="1">Binds 1 Mg(2+) ion per subunit.</text>
</comment>
<comment type="PTM">
    <text evidence="1">Activated by phosphorylation.</text>
</comment>
<comment type="similarity">
    <text evidence="1">Belongs to the phosphohexose mutase family.</text>
</comment>
<evidence type="ECO:0000255" key="1">
    <source>
        <dbReference type="HAMAP-Rule" id="MF_01554"/>
    </source>
</evidence>